<reference key="1">
    <citation type="journal article" date="1999" name="Microbiology">
        <title>Cytochrome c550 is an essential component of the quinoprotein ethanol oxidation system in Pseudomonas aeruginosa: cloning and sequencing of the genes encoding cytochrome c550 and an adjacent acetaldehyde dehydrogenase.</title>
        <authorList>
            <person name="Schobert M."/>
            <person name="Goerisch H."/>
        </authorList>
    </citation>
    <scope>NUCLEOTIDE SEQUENCE [GENOMIC DNA]</scope>
    <scope>FUNCTION</scope>
    <scope>CATALYTIC ACTIVITY</scope>
    <scope>INDUCTION</scope>
    <scope>PATHWAY</scope>
    <source>
        <strain>ATCC 17933 / 633</strain>
    </source>
</reference>
<evidence type="ECO:0000255" key="1">
    <source>
        <dbReference type="PROSITE-ProRule" id="PRU10007"/>
    </source>
</evidence>
<evidence type="ECO:0000255" key="2">
    <source>
        <dbReference type="PROSITE-ProRule" id="PRU10008"/>
    </source>
</evidence>
<evidence type="ECO:0000269" key="3">
    <source>
    </source>
</evidence>
<evidence type="ECO:0000303" key="4">
    <source>
    </source>
</evidence>
<evidence type="ECO:0000305" key="5"/>
<evidence type="ECO:0000305" key="6">
    <source>
    </source>
</evidence>
<evidence type="ECO:0000312" key="7">
    <source>
        <dbReference type="EMBL" id="AAC79659.1"/>
    </source>
</evidence>
<dbReference type="EC" id="1.2.1.-" evidence="3"/>
<dbReference type="EMBL" id="AF068264">
    <property type="protein sequence ID" value="AAC79659.1"/>
    <property type="molecule type" value="Genomic_DNA"/>
</dbReference>
<dbReference type="RefSeq" id="WP_329006586.1">
    <property type="nucleotide sequence ID" value="NZ_CP115193.1"/>
</dbReference>
<dbReference type="SMR" id="Q9ZAA1"/>
<dbReference type="UniPathway" id="UPA00780">
    <property type="reaction ID" value="UER00768"/>
</dbReference>
<dbReference type="GO" id="GO:0140087">
    <property type="term" value="F:acetaldehyde dehydrogenase (NAD+) activity"/>
    <property type="evidence" value="ECO:0007669"/>
    <property type="project" value="RHEA"/>
</dbReference>
<dbReference type="GO" id="GO:0006068">
    <property type="term" value="P:ethanol catabolic process"/>
    <property type="evidence" value="ECO:0007669"/>
    <property type="project" value="UniProtKB-UniPathway"/>
</dbReference>
<dbReference type="CDD" id="cd07559">
    <property type="entry name" value="ALDH_ACDHII_AcoD-like"/>
    <property type="match status" value="1"/>
</dbReference>
<dbReference type="FunFam" id="3.40.605.10:FF:000001">
    <property type="entry name" value="Aldehyde dehydrogenase 1"/>
    <property type="match status" value="1"/>
</dbReference>
<dbReference type="FunFam" id="3.40.309.10:FF:000012">
    <property type="entry name" value="Betaine aldehyde dehydrogenase"/>
    <property type="match status" value="1"/>
</dbReference>
<dbReference type="Gene3D" id="3.40.605.10">
    <property type="entry name" value="Aldehyde Dehydrogenase, Chain A, domain 1"/>
    <property type="match status" value="1"/>
</dbReference>
<dbReference type="Gene3D" id="3.40.309.10">
    <property type="entry name" value="Aldehyde Dehydrogenase, Chain A, domain 2"/>
    <property type="match status" value="1"/>
</dbReference>
<dbReference type="InterPro" id="IPR016161">
    <property type="entry name" value="Ald_DH/histidinol_DH"/>
</dbReference>
<dbReference type="InterPro" id="IPR016163">
    <property type="entry name" value="Ald_DH_C"/>
</dbReference>
<dbReference type="InterPro" id="IPR016160">
    <property type="entry name" value="Ald_DH_CS_CYS"/>
</dbReference>
<dbReference type="InterPro" id="IPR029510">
    <property type="entry name" value="Ald_DH_CS_GLU"/>
</dbReference>
<dbReference type="InterPro" id="IPR016162">
    <property type="entry name" value="Ald_DH_N"/>
</dbReference>
<dbReference type="InterPro" id="IPR015590">
    <property type="entry name" value="Aldehyde_DH_dom"/>
</dbReference>
<dbReference type="PANTHER" id="PTHR43111">
    <property type="entry name" value="ALDEHYDE DEHYDROGENASE B-RELATED"/>
    <property type="match status" value="1"/>
</dbReference>
<dbReference type="PANTHER" id="PTHR43111:SF1">
    <property type="entry name" value="ALDEHYDE DEHYDROGENASE B-RELATED"/>
    <property type="match status" value="1"/>
</dbReference>
<dbReference type="Pfam" id="PF00171">
    <property type="entry name" value="Aldedh"/>
    <property type="match status" value="1"/>
</dbReference>
<dbReference type="SUPFAM" id="SSF53720">
    <property type="entry name" value="ALDH-like"/>
    <property type="match status" value="1"/>
</dbReference>
<dbReference type="PROSITE" id="PS00070">
    <property type="entry name" value="ALDEHYDE_DEHYDR_CYS"/>
    <property type="match status" value="1"/>
</dbReference>
<dbReference type="PROSITE" id="PS00687">
    <property type="entry name" value="ALDEHYDE_DEHYDR_GLU"/>
    <property type="match status" value="1"/>
</dbReference>
<comment type="function">
    <text evidence="3">Catalyzes the NAD(+)-dependent oxidation of acetaldehyde to acetate. Is likely a component of the ethanol oxidation system that allows P.aeruginosa to grow on ethanol as the sole carbon and energy source.</text>
</comment>
<comment type="catalytic activity">
    <reaction evidence="3">
        <text>acetaldehyde + NAD(+) + H2O = acetate + NADH + 2 H(+)</text>
        <dbReference type="Rhea" id="RHEA:25294"/>
        <dbReference type="ChEBI" id="CHEBI:15343"/>
        <dbReference type="ChEBI" id="CHEBI:15377"/>
        <dbReference type="ChEBI" id="CHEBI:15378"/>
        <dbReference type="ChEBI" id="CHEBI:30089"/>
        <dbReference type="ChEBI" id="CHEBI:57540"/>
        <dbReference type="ChEBI" id="CHEBI:57945"/>
    </reaction>
    <physiologicalReaction direction="left-to-right" evidence="6">
        <dbReference type="Rhea" id="RHEA:25295"/>
    </physiologicalReaction>
</comment>
<comment type="pathway">
    <text evidence="6">Alcohol metabolism; ethanol degradation; acetate from ethanol: step 2/2.</text>
</comment>
<comment type="induction">
    <text evidence="6">Induced by growth on ethanol.</text>
</comment>
<comment type="similarity">
    <text evidence="5">Belongs to the aldehyde dehydrogenase family.</text>
</comment>
<sequence length="506" mass="54853">MIYAAPGTPGAVVTFKPRYGNYIGGEFVPPVKGQYFTNTSPVNGQPIAEFPRSTAEDIDKALDAAHAAADAWGRTSVQERSNILLKIADRIEQNLELLAVTETWDNGKAVRETLNADIPLAADHFRYFAGCIRAQEGSAAEINDSTVAYHIHEPLGVVGQIIPWNFPLLMAAWKLAPALAAGNCVVLKPAEQTPLGICVLLELIGDLLPPGVLNVVQGFGREAGEALATSKRIAKIAFTGSTPVGSHILKCAAESIIPSTVELGGKSPNIYFEDIMQAEPAFIEKAAEGLVLAFFNQGEVCTCPSRALVQESIYPAFMEEVLKKVRAIKRGDPLDTETMVGAQASQQQYEKILSYLDIAQQEGAELLAGGSVEKLEGNLASGYYIQPTLLKGHNGMRVFQEEIFGPVVGVTTFKDEAEALAIANDTEYGLGAGLWTRDINRAYRMGRGIKAGRVWTNCYHLYPAHAAFGGYKKSGVGRETHKMMLDHYQQTKNLLVSYDIDPLGFF</sequence>
<name>ACLDH_PSEAI</name>
<protein>
    <recommendedName>
        <fullName evidence="4">Acetaldehyde dehydrogenase</fullName>
        <ecNumber evidence="3">1.2.1.-</ecNumber>
    </recommendedName>
</protein>
<accession>Q9ZAA1</accession>
<keyword id="KW-0520">NAD</keyword>
<keyword id="KW-0560">Oxidoreductase</keyword>
<gene>
    <name evidence="4 7" type="primary">exaC</name>
</gene>
<organism>
    <name type="scientific">Pseudomonas aeruginosa</name>
    <dbReference type="NCBI Taxonomy" id="287"/>
    <lineage>
        <taxon>Bacteria</taxon>
        <taxon>Pseudomonadati</taxon>
        <taxon>Pseudomonadota</taxon>
        <taxon>Gammaproteobacteria</taxon>
        <taxon>Pseudomonadales</taxon>
        <taxon>Pseudomonadaceae</taxon>
        <taxon>Pseudomonas</taxon>
    </lineage>
</organism>
<feature type="chain" id="PRO_0000449348" description="Acetaldehyde dehydrogenase">
    <location>
        <begin position="1"/>
        <end position="506"/>
    </location>
</feature>
<feature type="active site" evidence="1">
    <location>
        <position position="262"/>
    </location>
</feature>
<feature type="active site" evidence="2">
    <location>
        <position position="301"/>
    </location>
</feature>
<proteinExistence type="evidence at protein level"/>